<evidence type="ECO:0000255" key="1">
    <source>
        <dbReference type="HAMAP-Rule" id="MF_01183"/>
    </source>
</evidence>
<evidence type="ECO:0000305" key="2"/>
<dbReference type="EC" id="5.2.1.8" evidence="1"/>
<dbReference type="EMBL" id="BA000037">
    <property type="protein sequence ID" value="BAC93244.1"/>
    <property type="status" value="ALT_INIT"/>
    <property type="molecule type" value="Genomic_DNA"/>
</dbReference>
<dbReference type="RefSeq" id="WP_043877365.1">
    <property type="nucleotide sequence ID" value="NC_005139.1"/>
</dbReference>
<dbReference type="SMR" id="Q7MP84"/>
<dbReference type="STRING" id="672.VV93_v1c04470"/>
<dbReference type="KEGG" id="vvy:VV0480"/>
<dbReference type="PATRIC" id="fig|196600.6.peg.506"/>
<dbReference type="eggNOG" id="COG0760">
    <property type="taxonomic scope" value="Bacteria"/>
</dbReference>
<dbReference type="HOGENOM" id="CLU_034646_11_0_6"/>
<dbReference type="Proteomes" id="UP000002675">
    <property type="component" value="Chromosome I"/>
</dbReference>
<dbReference type="GO" id="GO:0030288">
    <property type="term" value="C:outer membrane-bounded periplasmic space"/>
    <property type="evidence" value="ECO:0007669"/>
    <property type="project" value="InterPro"/>
</dbReference>
<dbReference type="GO" id="GO:0042277">
    <property type="term" value="F:peptide binding"/>
    <property type="evidence" value="ECO:0007669"/>
    <property type="project" value="InterPro"/>
</dbReference>
<dbReference type="GO" id="GO:0003755">
    <property type="term" value="F:peptidyl-prolyl cis-trans isomerase activity"/>
    <property type="evidence" value="ECO:0007669"/>
    <property type="project" value="UniProtKB-UniRule"/>
</dbReference>
<dbReference type="GO" id="GO:0051082">
    <property type="term" value="F:unfolded protein binding"/>
    <property type="evidence" value="ECO:0007669"/>
    <property type="project" value="UniProtKB-UniRule"/>
</dbReference>
<dbReference type="GO" id="GO:0043165">
    <property type="term" value="P:Gram-negative-bacterium-type cell outer membrane assembly"/>
    <property type="evidence" value="ECO:0007669"/>
    <property type="project" value="InterPro"/>
</dbReference>
<dbReference type="GO" id="GO:0006457">
    <property type="term" value="P:protein folding"/>
    <property type="evidence" value="ECO:0007669"/>
    <property type="project" value="UniProtKB-UniRule"/>
</dbReference>
<dbReference type="GO" id="GO:0050821">
    <property type="term" value="P:protein stabilization"/>
    <property type="evidence" value="ECO:0007669"/>
    <property type="project" value="InterPro"/>
</dbReference>
<dbReference type="Gene3D" id="3.10.50.40">
    <property type="match status" value="2"/>
</dbReference>
<dbReference type="Gene3D" id="1.10.4030.10">
    <property type="entry name" value="Porin chaperone SurA, peptide-binding domain"/>
    <property type="match status" value="2"/>
</dbReference>
<dbReference type="HAMAP" id="MF_01183">
    <property type="entry name" value="Chaperone_SurA"/>
    <property type="match status" value="1"/>
</dbReference>
<dbReference type="InterPro" id="IPR050280">
    <property type="entry name" value="OMP_Chaperone_SurA"/>
</dbReference>
<dbReference type="InterPro" id="IPR046357">
    <property type="entry name" value="PPIase_dom_sf"/>
</dbReference>
<dbReference type="InterPro" id="IPR000297">
    <property type="entry name" value="PPIase_PpiC"/>
</dbReference>
<dbReference type="InterPro" id="IPR023034">
    <property type="entry name" value="PPIase_SurA"/>
</dbReference>
<dbReference type="InterPro" id="IPR015391">
    <property type="entry name" value="SurA_N"/>
</dbReference>
<dbReference type="InterPro" id="IPR027304">
    <property type="entry name" value="Trigger_fact/SurA_dom_sf"/>
</dbReference>
<dbReference type="NCBIfam" id="NF008038">
    <property type="entry name" value="PRK10770.1"/>
    <property type="match status" value="1"/>
</dbReference>
<dbReference type="PANTHER" id="PTHR47637">
    <property type="entry name" value="CHAPERONE SURA"/>
    <property type="match status" value="1"/>
</dbReference>
<dbReference type="PANTHER" id="PTHR47637:SF1">
    <property type="entry name" value="CHAPERONE SURA"/>
    <property type="match status" value="1"/>
</dbReference>
<dbReference type="Pfam" id="PF13616">
    <property type="entry name" value="Rotamase_3"/>
    <property type="match status" value="2"/>
</dbReference>
<dbReference type="Pfam" id="PF09312">
    <property type="entry name" value="SurA_N"/>
    <property type="match status" value="1"/>
</dbReference>
<dbReference type="SUPFAM" id="SSF54534">
    <property type="entry name" value="FKBP-like"/>
    <property type="match status" value="2"/>
</dbReference>
<dbReference type="SUPFAM" id="SSF109998">
    <property type="entry name" value="Triger factor/SurA peptide-binding domain-like"/>
    <property type="match status" value="1"/>
</dbReference>
<dbReference type="PROSITE" id="PS50198">
    <property type="entry name" value="PPIC_PPIASE_2"/>
    <property type="match status" value="2"/>
</dbReference>
<keyword id="KW-0143">Chaperone</keyword>
<keyword id="KW-0413">Isomerase</keyword>
<keyword id="KW-0574">Periplasm</keyword>
<keyword id="KW-0677">Repeat</keyword>
<keyword id="KW-0697">Rotamase</keyword>
<keyword id="KW-0732">Signal</keyword>
<reference key="1">
    <citation type="journal article" date="2003" name="Genome Res.">
        <title>Comparative genome analysis of Vibrio vulnificus, a marine pathogen.</title>
        <authorList>
            <person name="Chen C.-Y."/>
            <person name="Wu K.-M."/>
            <person name="Chang Y.-C."/>
            <person name="Chang C.-H."/>
            <person name="Tsai H.-C."/>
            <person name="Liao T.-L."/>
            <person name="Liu Y.-M."/>
            <person name="Chen H.-J."/>
            <person name="Shen A.B.-T."/>
            <person name="Li J.-C."/>
            <person name="Su T.-L."/>
            <person name="Shao C.-P."/>
            <person name="Lee C.-T."/>
            <person name="Hor L.-I."/>
            <person name="Tsai S.-F."/>
        </authorList>
    </citation>
    <scope>NUCLEOTIDE SEQUENCE [LARGE SCALE GENOMIC DNA]</scope>
    <source>
        <strain>YJ016</strain>
    </source>
</reference>
<feature type="signal peptide" evidence="1">
    <location>
        <begin position="1"/>
        <end position="19"/>
    </location>
</feature>
<feature type="chain" id="PRO_0000270047" description="Chaperone SurA">
    <location>
        <begin position="20"/>
        <end position="428"/>
    </location>
</feature>
<feature type="domain" description="PpiC 1" evidence="1">
    <location>
        <begin position="170"/>
        <end position="268"/>
    </location>
</feature>
<feature type="domain" description="PpiC 2" evidence="1">
    <location>
        <begin position="277"/>
        <end position="377"/>
    </location>
</feature>
<comment type="function">
    <text evidence="1">Chaperone involved in the correct folding and assembly of outer membrane proteins. Recognizes specific patterns of aromatic residues and the orientation of their side chains, which are found more frequently in integral outer membrane proteins. May act in both early periplasmic and late outer membrane-associated steps of protein maturation.</text>
</comment>
<comment type="catalytic activity">
    <reaction evidence="1">
        <text>[protein]-peptidylproline (omega=180) = [protein]-peptidylproline (omega=0)</text>
        <dbReference type="Rhea" id="RHEA:16237"/>
        <dbReference type="Rhea" id="RHEA-COMP:10747"/>
        <dbReference type="Rhea" id="RHEA-COMP:10748"/>
        <dbReference type="ChEBI" id="CHEBI:83833"/>
        <dbReference type="ChEBI" id="CHEBI:83834"/>
        <dbReference type="EC" id="5.2.1.8"/>
    </reaction>
</comment>
<comment type="subcellular location">
    <subcellularLocation>
        <location evidence="1">Periplasm</location>
    </subcellularLocation>
    <text evidence="1">Is capable of associating with the outer membrane.</text>
</comment>
<comment type="domain">
    <text evidence="1">The PPIase activity resides only in the second parvulin domain. The N-terminal region and the C-terminal tail are necessary and sufficient for the chaperone activity of SurA. The PPIase activity is dispensable for SurA to function as a chaperone. The N-terminal region and the C-terminal tail are also required for porin recognition.</text>
</comment>
<comment type="sequence caution" evidence="2">
    <conflict type="erroneous initiation">
        <sequence resource="EMBL-CDS" id="BAC93244"/>
    </conflict>
</comment>
<gene>
    <name evidence="1" type="primary">surA</name>
    <name type="ordered locus">VV0480</name>
</gene>
<name>SURA_VIBVY</name>
<protein>
    <recommendedName>
        <fullName evidence="1">Chaperone SurA</fullName>
    </recommendedName>
    <alternativeName>
        <fullName evidence="1">Peptidyl-prolyl cis-trans isomerase SurA</fullName>
        <shortName evidence="1">PPIase SurA</shortName>
        <ecNumber evidence="1">5.2.1.8</ecNumber>
    </alternativeName>
    <alternativeName>
        <fullName evidence="1">Rotamase SurA</fullName>
    </alternativeName>
</protein>
<accession>Q7MP84</accession>
<sequence length="428" mass="47779">MNIWKTLLLGMLVTGSAVSAPVELDKVAVIVNDGVILQSDIDTATKTLRANAKKSGQALPDADVLNEQIVDKLIIDTLQTQEADRIGVRIDDTRLNQAIEEIARNNNQTIDELSAAIASEGVSYEEFREQIRKEMAASEARNALVRRRINILPAEVDNLAELLSKETNASVEYRIGHIQLRFTDGQDKSALEAQAKELVEKLKQGADFSTMAYTYSKGPKALQGGDWGWMRKEEMPTIFADQIKMQNKGSIIGPFRSGVGFHILKIEDVKGLETVAVTEVNARHILLKPTVILSDEGAQRELNEFIRRIRAGEATFGELAQQYSQDPGSAAQDGELGYQTPDLYVPEFKHQVETLPVGTISEPFKTVHGWHIVEVLDRREVDRTDSAMKNKAYRILFNRKFNEEVGAWMQELRAGAFVEIINEEENDG</sequence>
<organism>
    <name type="scientific">Vibrio vulnificus (strain YJ016)</name>
    <dbReference type="NCBI Taxonomy" id="196600"/>
    <lineage>
        <taxon>Bacteria</taxon>
        <taxon>Pseudomonadati</taxon>
        <taxon>Pseudomonadota</taxon>
        <taxon>Gammaproteobacteria</taxon>
        <taxon>Vibrionales</taxon>
        <taxon>Vibrionaceae</taxon>
        <taxon>Vibrio</taxon>
    </lineage>
</organism>
<proteinExistence type="inferred from homology"/>